<accession>P9WKY5</accession>
<accession>Q8VJ11</accession>
<proteinExistence type="evidence at protein level"/>
<feature type="chain" id="PRO_0000343615" description="Histone acetyltransferase">
    <location>
        <begin position="1"/>
        <end position="76"/>
    </location>
</feature>
<sequence length="76" mass="8442">MSFGFPTFSQNRFTEQYSGLCPIAPGRGAGLQPCRRDCPVARWLVADHPVFGSDCRCRMMVGVNRVRIGRHELTGA</sequence>
<organism>
    <name type="scientific">Mycobacterium tuberculosis (strain ATCC 25618 / H37Rv)</name>
    <dbReference type="NCBI Taxonomy" id="83332"/>
    <lineage>
        <taxon>Bacteria</taxon>
        <taxon>Bacillati</taxon>
        <taxon>Actinomycetota</taxon>
        <taxon>Actinomycetes</taxon>
        <taxon>Mycobacteriales</taxon>
        <taxon>Mycobacteriaceae</taxon>
        <taxon>Mycobacterium</taxon>
        <taxon>Mycobacterium tuberculosis complex</taxon>
    </lineage>
</organism>
<evidence type="ECO:0000269" key="1">
    <source>
    </source>
</evidence>
<evidence type="ECO:0000269" key="2">
    <source ref="2"/>
</evidence>
<evidence type="ECO:0000303" key="3">
    <source>
    </source>
</evidence>
<comment type="function">
    <text evidence="1">Histone acetyltransferase, which by binding to the host chromatin, may manipulate the expression of host genes involved in anti-inflammatory responses to evade clearance and to survive in the intracellular milieu. Acetylates histone H3 at the 'Lys-9' and 'Lys-14' positions.</text>
</comment>
<comment type="catalytic activity">
    <reaction evidence="1">
        <text>L-lysyl-[protein] + acetyl-CoA = N(6)-acetyl-L-lysyl-[protein] + CoA + H(+)</text>
        <dbReference type="Rhea" id="RHEA:45948"/>
        <dbReference type="Rhea" id="RHEA-COMP:9752"/>
        <dbReference type="Rhea" id="RHEA-COMP:10731"/>
        <dbReference type="ChEBI" id="CHEBI:15378"/>
        <dbReference type="ChEBI" id="CHEBI:29969"/>
        <dbReference type="ChEBI" id="CHEBI:57287"/>
        <dbReference type="ChEBI" id="CHEBI:57288"/>
        <dbReference type="ChEBI" id="CHEBI:61930"/>
        <dbReference type="EC" id="2.3.1.48"/>
    </reaction>
</comment>
<comment type="activity regulation">
    <text evidence="1">Is completely inhibited by anacardic acid, an inhibitor of HAT activity.</text>
</comment>
<comment type="subunit">
    <text evidence="1">Physically interacts with histone H3 in infected macrophages.</text>
</comment>
<comment type="subcellular location">
    <subcellularLocation>
        <location evidence="1">Secreted</location>
    </subcellularLocation>
    <subcellularLocation>
        <location evidence="1">Host cytoplasm</location>
    </subcellularLocation>
    <subcellularLocation>
        <location evidence="1">Host nucleus</location>
    </subcellularLocation>
    <text evidence="1">Colocalizes with the chromatin in the nucleus of infected human macrophages.</text>
</comment>
<comment type="induction">
    <text evidence="1">Expression of this gene marginally increases (1.5-fold) in macrophages from 12 to 24 hours post-infection, and does not decrease up to 60 h.</text>
</comment>
<comment type="mass spectrometry" mass="8436.1" method="MALDI" evidence="2"/>
<comment type="miscellaneous">
    <text>On the 2D-gel the determined pI of this protein is: 9.47.</text>
</comment>
<dbReference type="EC" id="2.3.1.48" evidence="1"/>
<dbReference type="EMBL" id="AL123456">
    <property type="status" value="NOT_ANNOTATED_CDS"/>
    <property type="molecule type" value="Genomic_DNA"/>
</dbReference>
<dbReference type="RefSeq" id="WP_003900685.1">
    <property type="nucleotide sequence ID" value="NZ_NVQJ01000027.1"/>
</dbReference>
<dbReference type="TubercuList" id="Rv3423.1"/>
<dbReference type="InParanoid" id="P9WKY5"/>
<dbReference type="Proteomes" id="UP000001584">
    <property type="component" value="Chromosome"/>
</dbReference>
<dbReference type="GO" id="GO:0005576">
    <property type="term" value="C:extracellular region"/>
    <property type="evidence" value="ECO:0007669"/>
    <property type="project" value="UniProtKB-SubCell"/>
</dbReference>
<dbReference type="GO" id="GO:0030430">
    <property type="term" value="C:host cell cytoplasm"/>
    <property type="evidence" value="ECO:0007669"/>
    <property type="project" value="UniProtKB-SubCell"/>
</dbReference>
<dbReference type="GO" id="GO:0042025">
    <property type="term" value="C:host cell nucleus"/>
    <property type="evidence" value="ECO:0000314"/>
    <property type="project" value="UniProtKB"/>
</dbReference>
<dbReference type="GO" id="GO:0003682">
    <property type="term" value="F:chromatin binding"/>
    <property type="evidence" value="ECO:0000314"/>
    <property type="project" value="UniProtKB"/>
</dbReference>
<dbReference type="GO" id="GO:0042393">
    <property type="term" value="F:histone binding"/>
    <property type="evidence" value="ECO:0000314"/>
    <property type="project" value="UniProtKB"/>
</dbReference>
<dbReference type="GO" id="GO:0010484">
    <property type="term" value="F:histone H3 acetyltransferase activity"/>
    <property type="evidence" value="ECO:0000314"/>
    <property type="project" value="UniProtKB"/>
</dbReference>
<dbReference type="GO" id="GO:0044068">
    <property type="term" value="P:symbiont-mediated perturbation of host cellular process"/>
    <property type="evidence" value="ECO:0000314"/>
    <property type="project" value="UniProtKB"/>
</dbReference>
<keyword id="KW-0012">Acyltransferase</keyword>
<keyword id="KW-0903">Direct protein sequencing</keyword>
<keyword id="KW-1035">Host cytoplasm</keyword>
<keyword id="KW-1048">Host nucleus</keyword>
<keyword id="KW-1185">Reference proteome</keyword>
<keyword id="KW-0964">Secreted</keyword>
<keyword id="KW-0808">Transferase</keyword>
<reference key="1">
    <citation type="journal article" date="1998" name="Nature">
        <title>Deciphering the biology of Mycobacterium tuberculosis from the complete genome sequence.</title>
        <authorList>
            <person name="Cole S.T."/>
            <person name="Brosch R."/>
            <person name="Parkhill J."/>
            <person name="Garnier T."/>
            <person name="Churcher C.M."/>
            <person name="Harris D.E."/>
            <person name="Gordon S.V."/>
            <person name="Eiglmeier K."/>
            <person name="Gas S."/>
            <person name="Barry C.E. III"/>
            <person name="Tekaia F."/>
            <person name="Badcock K."/>
            <person name="Basham D."/>
            <person name="Brown D."/>
            <person name="Chillingworth T."/>
            <person name="Connor R."/>
            <person name="Davies R.M."/>
            <person name="Devlin K."/>
            <person name="Feltwell T."/>
            <person name="Gentles S."/>
            <person name="Hamlin N."/>
            <person name="Holroyd S."/>
            <person name="Hornsby T."/>
            <person name="Jagels K."/>
            <person name="Krogh A."/>
            <person name="McLean J."/>
            <person name="Moule S."/>
            <person name="Murphy L.D."/>
            <person name="Oliver S."/>
            <person name="Osborne J."/>
            <person name="Quail M.A."/>
            <person name="Rajandream M.A."/>
            <person name="Rogers J."/>
            <person name="Rutter S."/>
            <person name="Seeger K."/>
            <person name="Skelton S."/>
            <person name="Squares S."/>
            <person name="Squares R."/>
            <person name="Sulston J.E."/>
            <person name="Taylor K."/>
            <person name="Whitehead S."/>
            <person name="Barrell B.G."/>
        </authorList>
    </citation>
    <scope>NUCLEOTIDE SEQUENCE [LARGE SCALE GENOMIC DNA]</scope>
    <source>
        <strain>ATCC 25618 / H37Rv</strain>
    </source>
</reference>
<reference key="2">
    <citation type="submission" date="2008-05" db="UniProtKB">
        <authorList>
            <person name="Jose L."/>
            <person name="Lakshmanan D."/>
            <person name="Mundayoor S."/>
            <person name="Kumar R.A."/>
        </authorList>
    </citation>
    <scope>PROTEIN SEQUENCE OF 1-12</scope>
    <scope>MASS SPECTROMETRY</scope>
    <source>
        <strain>ATCC 25618 / H37Rv</strain>
    </source>
</reference>
<reference key="3">
    <citation type="journal article" date="2016" name="FEBS J.">
        <title>Hypothetical protein Rv3423.1 of Mycobacterium tuberculosis is a histone acetyltransferase.</title>
        <authorList>
            <person name="Jose L."/>
            <person name="Ramachandran R."/>
            <person name="Bhagavat R."/>
            <person name="Gomez R.L."/>
            <person name="Chandran A."/>
            <person name="Raghunandanan S."/>
            <person name="Omkumar R.V."/>
            <person name="Chandra N."/>
            <person name="Mundayoor S."/>
            <person name="Kumar R.A."/>
        </authorList>
    </citation>
    <scope>IDENTIFICATION BY MASS SPECTROMETRY</scope>
    <scope>FUNCTION</scope>
    <scope>CATALYTIC ACTIVITY</scope>
    <scope>SUBCELLULAR LOCATION</scope>
    <scope>3D-STRUCTURE MODELING</scope>
    <scope>ACTIVITY REGULATION</scope>
    <scope>INDUCTION</scope>
    <scope>INTERACTION WITH HISTONE H3</scope>
    <source>
        <strain>H37Rv</strain>
    </source>
</reference>
<gene>
    <name type="ordered locus">Rv3423.1</name>
</gene>
<name>HAT_MYCTU</name>
<protein>
    <recommendedName>
        <fullName evidence="3">Histone acetyltransferase</fullName>
        <shortName evidence="3">HAT</shortName>
        <ecNumber evidence="1">2.3.1.48</ecNumber>
    </recommendedName>
</protein>